<name>DBP3_NEOFI</name>
<dbReference type="EC" id="3.6.4.13"/>
<dbReference type="EMBL" id="DS027696">
    <property type="protein sequence ID" value="EAW18358.1"/>
    <property type="molecule type" value="Genomic_DNA"/>
</dbReference>
<dbReference type="RefSeq" id="XP_001260255.1">
    <property type="nucleotide sequence ID" value="XM_001260254.1"/>
</dbReference>
<dbReference type="SMR" id="A1DG51"/>
<dbReference type="STRING" id="331117.A1DG51"/>
<dbReference type="EnsemblFungi" id="EAW18358">
    <property type="protein sequence ID" value="EAW18358"/>
    <property type="gene ID" value="NFIA_083090"/>
</dbReference>
<dbReference type="GeneID" id="4586812"/>
<dbReference type="KEGG" id="nfi:NFIA_083090"/>
<dbReference type="VEuPathDB" id="FungiDB:NFIA_083090"/>
<dbReference type="eggNOG" id="KOG0331">
    <property type="taxonomic scope" value="Eukaryota"/>
</dbReference>
<dbReference type="HOGENOM" id="CLU_003041_1_5_1"/>
<dbReference type="OMA" id="KKTHDMY"/>
<dbReference type="OrthoDB" id="196131at2759"/>
<dbReference type="Proteomes" id="UP000006702">
    <property type="component" value="Unassembled WGS sequence"/>
</dbReference>
<dbReference type="GO" id="GO:0005730">
    <property type="term" value="C:nucleolus"/>
    <property type="evidence" value="ECO:0007669"/>
    <property type="project" value="UniProtKB-SubCell"/>
</dbReference>
<dbReference type="GO" id="GO:0030687">
    <property type="term" value="C:preribosome, large subunit precursor"/>
    <property type="evidence" value="ECO:0007669"/>
    <property type="project" value="EnsemblFungi"/>
</dbReference>
<dbReference type="GO" id="GO:0005524">
    <property type="term" value="F:ATP binding"/>
    <property type="evidence" value="ECO:0007669"/>
    <property type="project" value="UniProtKB-KW"/>
</dbReference>
<dbReference type="GO" id="GO:0016887">
    <property type="term" value="F:ATP hydrolysis activity"/>
    <property type="evidence" value="ECO:0007669"/>
    <property type="project" value="RHEA"/>
</dbReference>
<dbReference type="GO" id="GO:0003723">
    <property type="term" value="F:RNA binding"/>
    <property type="evidence" value="ECO:0007669"/>
    <property type="project" value="UniProtKB-KW"/>
</dbReference>
<dbReference type="GO" id="GO:0003724">
    <property type="term" value="F:RNA helicase activity"/>
    <property type="evidence" value="ECO:0007669"/>
    <property type="project" value="UniProtKB-EC"/>
</dbReference>
<dbReference type="GO" id="GO:0000464">
    <property type="term" value="P:endonucleolytic cleavage in ITS1 upstream of 5.8S rRNA from tricistronic rRNA transcript (SSU-rRNA, 5.8S rRNA, LSU-rRNA)"/>
    <property type="evidence" value="ECO:0007669"/>
    <property type="project" value="EnsemblFungi"/>
</dbReference>
<dbReference type="CDD" id="cd00268">
    <property type="entry name" value="DEADc"/>
    <property type="match status" value="1"/>
</dbReference>
<dbReference type="CDD" id="cd18787">
    <property type="entry name" value="SF2_C_DEAD"/>
    <property type="match status" value="1"/>
</dbReference>
<dbReference type="FunFam" id="3.40.50.300:FF:000008">
    <property type="entry name" value="ATP-dependent RNA helicase RhlB"/>
    <property type="match status" value="1"/>
</dbReference>
<dbReference type="Gene3D" id="3.40.50.300">
    <property type="entry name" value="P-loop containing nucleotide triphosphate hydrolases"/>
    <property type="match status" value="2"/>
</dbReference>
<dbReference type="InterPro" id="IPR011545">
    <property type="entry name" value="DEAD/DEAH_box_helicase_dom"/>
</dbReference>
<dbReference type="InterPro" id="IPR014001">
    <property type="entry name" value="Helicase_ATP-bd"/>
</dbReference>
<dbReference type="InterPro" id="IPR001650">
    <property type="entry name" value="Helicase_C-like"/>
</dbReference>
<dbReference type="InterPro" id="IPR027417">
    <property type="entry name" value="P-loop_NTPase"/>
</dbReference>
<dbReference type="InterPro" id="IPR000629">
    <property type="entry name" value="RNA-helicase_DEAD-box_CS"/>
</dbReference>
<dbReference type="PANTHER" id="PTHR47958">
    <property type="entry name" value="ATP-DEPENDENT RNA HELICASE DBP3"/>
    <property type="match status" value="1"/>
</dbReference>
<dbReference type="Pfam" id="PF00270">
    <property type="entry name" value="DEAD"/>
    <property type="match status" value="1"/>
</dbReference>
<dbReference type="Pfam" id="PF00271">
    <property type="entry name" value="Helicase_C"/>
    <property type="match status" value="1"/>
</dbReference>
<dbReference type="SMART" id="SM00487">
    <property type="entry name" value="DEXDc"/>
    <property type="match status" value="1"/>
</dbReference>
<dbReference type="SMART" id="SM00490">
    <property type="entry name" value="HELICc"/>
    <property type="match status" value="1"/>
</dbReference>
<dbReference type="SUPFAM" id="SSF52540">
    <property type="entry name" value="P-loop containing nucleoside triphosphate hydrolases"/>
    <property type="match status" value="1"/>
</dbReference>
<dbReference type="PROSITE" id="PS00039">
    <property type="entry name" value="DEAD_ATP_HELICASE"/>
    <property type="match status" value="1"/>
</dbReference>
<dbReference type="PROSITE" id="PS51192">
    <property type="entry name" value="HELICASE_ATP_BIND_1"/>
    <property type="match status" value="1"/>
</dbReference>
<dbReference type="PROSITE" id="PS51194">
    <property type="entry name" value="HELICASE_CTER"/>
    <property type="match status" value="1"/>
</dbReference>
<feature type="chain" id="PRO_0000281698" description="ATP-dependent RNA helicase dbp3">
    <location>
        <begin position="1"/>
        <end position="503"/>
    </location>
</feature>
<feature type="domain" description="Helicase ATP-binding" evidence="2">
    <location>
        <begin position="116"/>
        <end position="292"/>
    </location>
</feature>
<feature type="domain" description="Helicase C-terminal" evidence="3">
    <location>
        <begin position="307"/>
        <end position="472"/>
    </location>
</feature>
<feature type="region of interest" description="Disordered" evidence="4">
    <location>
        <begin position="1"/>
        <end position="35"/>
    </location>
</feature>
<feature type="short sequence motif" description="Q motif">
    <location>
        <begin position="104"/>
        <end position="112"/>
    </location>
</feature>
<feature type="short sequence motif" description="DEAD box">
    <location>
        <begin position="239"/>
        <end position="242"/>
    </location>
</feature>
<feature type="compositionally biased region" description="Basic and acidic residues" evidence="4">
    <location>
        <begin position="1"/>
        <end position="25"/>
    </location>
</feature>
<feature type="binding site" evidence="2">
    <location>
        <begin position="129"/>
        <end position="136"/>
    </location>
    <ligand>
        <name>ATP</name>
        <dbReference type="ChEBI" id="CHEBI:30616"/>
    </ligand>
</feature>
<accession>A1DG51</accession>
<sequence length="503" mass="54970">MAKRVQHEGGDYRPQKRSKNERNGEGSKVSPSAEAIRNELDPISDATYVQSPALGDLSQIEIDQFLAKHCIKVTDSSEAPPLRPIISFSHLPSSFSKIYDPLSSFSSPTPIQSATWPLLFAGRDVIGIAETGSGKTLAFGLPCIKKILDSGKVKRKHARPAAVIISPTRELAMQIYDQLSKFGASVDIRVTCIYGGVKKDEQREALKTAAIVVATPGRLKDLQNDGSVDLGKVKYLVLDEADRMLDKGFEQDIKDIIRSMPDSKRQTVMFTATWPPSVRDLAATFMTSAVTVTIGGDPSADPRANTRIKQVVEVVKPQEKEARLVQLLNRSQRGAAVCDKVLVFCLYKKEAVRVERLLRTKNFKVAGIHGDLNQHERFKSLEAFKTGAATVLVATDVAARGLDIPSVKLVINVTFPLTVEDYVHRIGRTGRAGADGHAITLFTETDKAQSGALINVLRAAKQDVPDALLKFGTTVKKKQHGAYGAFFKDVDTSKSATKIVFDE</sequence>
<proteinExistence type="inferred from homology"/>
<organism>
    <name type="scientific">Neosartorya fischeri (strain ATCC 1020 / DSM 3700 / CBS 544.65 / FGSC A1164 / JCM 1740 / NRRL 181 / WB 181)</name>
    <name type="common">Aspergillus fischerianus</name>
    <dbReference type="NCBI Taxonomy" id="331117"/>
    <lineage>
        <taxon>Eukaryota</taxon>
        <taxon>Fungi</taxon>
        <taxon>Dikarya</taxon>
        <taxon>Ascomycota</taxon>
        <taxon>Pezizomycotina</taxon>
        <taxon>Eurotiomycetes</taxon>
        <taxon>Eurotiomycetidae</taxon>
        <taxon>Eurotiales</taxon>
        <taxon>Aspergillaceae</taxon>
        <taxon>Aspergillus</taxon>
        <taxon>Aspergillus subgen. Fumigati</taxon>
    </lineage>
</organism>
<reference key="1">
    <citation type="journal article" date="2008" name="PLoS Genet.">
        <title>Genomic islands in the pathogenic filamentous fungus Aspergillus fumigatus.</title>
        <authorList>
            <person name="Fedorova N.D."/>
            <person name="Khaldi N."/>
            <person name="Joardar V.S."/>
            <person name="Maiti R."/>
            <person name="Amedeo P."/>
            <person name="Anderson M.J."/>
            <person name="Crabtree J."/>
            <person name="Silva J.C."/>
            <person name="Badger J.H."/>
            <person name="Albarraq A."/>
            <person name="Angiuoli S."/>
            <person name="Bussey H."/>
            <person name="Bowyer P."/>
            <person name="Cotty P.J."/>
            <person name="Dyer P.S."/>
            <person name="Egan A."/>
            <person name="Galens K."/>
            <person name="Fraser-Liggett C.M."/>
            <person name="Haas B.J."/>
            <person name="Inman J.M."/>
            <person name="Kent R."/>
            <person name="Lemieux S."/>
            <person name="Malavazi I."/>
            <person name="Orvis J."/>
            <person name="Roemer T."/>
            <person name="Ronning C.M."/>
            <person name="Sundaram J.P."/>
            <person name="Sutton G."/>
            <person name="Turner G."/>
            <person name="Venter J.C."/>
            <person name="White O.R."/>
            <person name="Whitty B.R."/>
            <person name="Youngman P."/>
            <person name="Wolfe K.H."/>
            <person name="Goldman G.H."/>
            <person name="Wortman J.R."/>
            <person name="Jiang B."/>
            <person name="Denning D.W."/>
            <person name="Nierman W.C."/>
        </authorList>
    </citation>
    <scope>NUCLEOTIDE SEQUENCE [LARGE SCALE GENOMIC DNA]</scope>
    <source>
        <strain>ATCC 1020 / DSM 3700 / CBS 544.65 / FGSC A1164 / JCM 1740 / NRRL 181 / WB 181</strain>
    </source>
</reference>
<keyword id="KW-0067">ATP-binding</keyword>
<keyword id="KW-0347">Helicase</keyword>
<keyword id="KW-0378">Hydrolase</keyword>
<keyword id="KW-0547">Nucleotide-binding</keyword>
<keyword id="KW-0539">Nucleus</keyword>
<keyword id="KW-1185">Reference proteome</keyword>
<keyword id="KW-0690">Ribosome biogenesis</keyword>
<keyword id="KW-0694">RNA-binding</keyword>
<keyword id="KW-0698">rRNA processing</keyword>
<protein>
    <recommendedName>
        <fullName>ATP-dependent RNA helicase dbp3</fullName>
        <ecNumber>3.6.4.13</ecNumber>
    </recommendedName>
</protein>
<evidence type="ECO:0000250" key="1"/>
<evidence type="ECO:0000255" key="2">
    <source>
        <dbReference type="PROSITE-ProRule" id="PRU00541"/>
    </source>
</evidence>
<evidence type="ECO:0000255" key="3">
    <source>
        <dbReference type="PROSITE-ProRule" id="PRU00542"/>
    </source>
</evidence>
<evidence type="ECO:0000256" key="4">
    <source>
        <dbReference type="SAM" id="MobiDB-lite"/>
    </source>
</evidence>
<evidence type="ECO:0000305" key="5"/>
<comment type="function">
    <text evidence="1">ATP-dependent RNA helicase required for 60S ribosomal subunit synthesis. Involved in efficient pre-rRNA processing, predominantly at site A3, which is necessary for the normal formation of 25S and 5.8S rRNAs (By similarity).</text>
</comment>
<comment type="catalytic activity">
    <reaction>
        <text>ATP + H2O = ADP + phosphate + H(+)</text>
        <dbReference type="Rhea" id="RHEA:13065"/>
        <dbReference type="ChEBI" id="CHEBI:15377"/>
        <dbReference type="ChEBI" id="CHEBI:15378"/>
        <dbReference type="ChEBI" id="CHEBI:30616"/>
        <dbReference type="ChEBI" id="CHEBI:43474"/>
        <dbReference type="ChEBI" id="CHEBI:456216"/>
        <dbReference type="EC" id="3.6.4.13"/>
    </reaction>
</comment>
<comment type="subcellular location">
    <subcellularLocation>
        <location evidence="1">Nucleus</location>
        <location evidence="1">Nucleolus</location>
    </subcellularLocation>
</comment>
<comment type="domain">
    <text>The Q motif is unique to and characteristic of the DEAD box family of RNA helicases and controls ATP binding and hydrolysis.</text>
</comment>
<comment type="similarity">
    <text evidence="5">Belongs to the DEAD box helicase family. DDX5/DBP2 subfamily.</text>
</comment>
<gene>
    <name type="primary">dbp3</name>
    <name type="ORF">NFIA_083090</name>
</gene>